<protein>
    <recommendedName>
        <fullName evidence="1">ATP synthase subunit delta</fullName>
    </recommendedName>
    <alternativeName>
        <fullName evidence="1">ATP synthase F(1) sector subunit delta</fullName>
    </alternativeName>
    <alternativeName>
        <fullName evidence="1">F-type ATPase subunit delta</fullName>
        <shortName evidence="1">F-ATPase subunit delta</shortName>
    </alternativeName>
</protein>
<comment type="function">
    <text evidence="1">F(1)F(0) ATP synthase produces ATP from ADP in the presence of a proton or sodium gradient. F-type ATPases consist of two structural domains, F(1) containing the extramembraneous catalytic core and F(0) containing the membrane proton channel, linked together by a central stalk and a peripheral stalk. During catalysis, ATP synthesis in the catalytic domain of F(1) is coupled via a rotary mechanism of the central stalk subunits to proton translocation.</text>
</comment>
<comment type="function">
    <text evidence="1">This protein is part of the stalk that links CF(0) to CF(1). It either transmits conformational changes from CF(0) to CF(1) or is implicated in proton conduction.</text>
</comment>
<comment type="subunit">
    <text evidence="1">F-type ATPases have 2 components, F(1) - the catalytic core - and F(0) - the membrane proton channel. F(1) has five subunits: alpha(3), beta(3), gamma(1), delta(1), epsilon(1). F(0) has three main subunits: a(1), b(2) and c(10-14). The alpha and beta chains form an alternating ring which encloses part of the gamma chain. F(1) is attached to F(0) by a central stalk formed by the gamma and epsilon chains, while a peripheral stalk is formed by the delta and b chains.</text>
</comment>
<comment type="subcellular location">
    <subcellularLocation>
        <location evidence="1">Cell inner membrane</location>
        <topology evidence="1">Peripheral membrane protein</topology>
    </subcellularLocation>
</comment>
<comment type="similarity">
    <text evidence="1">Belongs to the ATPase delta chain family.</text>
</comment>
<reference key="1">
    <citation type="journal article" date="2008" name="BMC Genomics">
        <title>The missing link: Bordetella petrii is endowed with both the metabolic versatility of environmental bacteria and virulence traits of pathogenic Bordetellae.</title>
        <authorList>
            <person name="Gross R."/>
            <person name="Guzman C.A."/>
            <person name="Sebaihia M."/>
            <person name="Martin dos Santos V.A.P."/>
            <person name="Pieper D.H."/>
            <person name="Koebnik R."/>
            <person name="Lechner M."/>
            <person name="Bartels D."/>
            <person name="Buhrmester J."/>
            <person name="Choudhuri J.V."/>
            <person name="Ebensen T."/>
            <person name="Gaigalat L."/>
            <person name="Herrmann S."/>
            <person name="Khachane A.N."/>
            <person name="Larisch C."/>
            <person name="Link S."/>
            <person name="Linke B."/>
            <person name="Meyer F."/>
            <person name="Mormann S."/>
            <person name="Nakunst D."/>
            <person name="Rueckert C."/>
            <person name="Schneiker-Bekel S."/>
            <person name="Schulze K."/>
            <person name="Voerholter F.-J."/>
            <person name="Yevsa T."/>
            <person name="Engle J.T."/>
            <person name="Goldman W.E."/>
            <person name="Puehler A."/>
            <person name="Goebel U.B."/>
            <person name="Goesmann A."/>
            <person name="Bloecker H."/>
            <person name="Kaiser O."/>
            <person name="Martinez-Arias R."/>
        </authorList>
    </citation>
    <scope>NUCLEOTIDE SEQUENCE [LARGE SCALE GENOMIC DNA]</scope>
    <source>
        <strain>ATCC BAA-461 / DSM 12804 / CCUG 43448</strain>
    </source>
</reference>
<proteinExistence type="inferred from homology"/>
<organism>
    <name type="scientific">Bordetella petrii (strain ATCC BAA-461 / DSM 12804 / CCUG 43448)</name>
    <dbReference type="NCBI Taxonomy" id="340100"/>
    <lineage>
        <taxon>Bacteria</taxon>
        <taxon>Pseudomonadati</taxon>
        <taxon>Pseudomonadota</taxon>
        <taxon>Betaproteobacteria</taxon>
        <taxon>Burkholderiales</taxon>
        <taxon>Alcaligenaceae</taxon>
        <taxon>Bordetella</taxon>
    </lineage>
</organism>
<sequence length="179" mass="19300">MAELSTVARPYAEALFSAARDDKAGLPAWADLIGELAQVAGNPDVREAMTDPRLGDAQRIELFTGLVKTQLPQAVRNFIELLVANDRLLLLPVIAKQFVALKNRHEGTAQAEITSAFELSDAQVKELIEALETKFGLKLKPSVTVDKSLIGGVRVAVGDQVLDTSVQAQLARLRDTLAA</sequence>
<gene>
    <name evidence="1" type="primary">atpH</name>
    <name type="ordered locus">Bpet0339</name>
</gene>
<keyword id="KW-0066">ATP synthesis</keyword>
<keyword id="KW-0997">Cell inner membrane</keyword>
<keyword id="KW-1003">Cell membrane</keyword>
<keyword id="KW-0139">CF(1)</keyword>
<keyword id="KW-0375">Hydrogen ion transport</keyword>
<keyword id="KW-0406">Ion transport</keyword>
<keyword id="KW-0472">Membrane</keyword>
<keyword id="KW-0813">Transport</keyword>
<accession>A9HY39</accession>
<name>ATPD_BORPD</name>
<evidence type="ECO:0000255" key="1">
    <source>
        <dbReference type="HAMAP-Rule" id="MF_01416"/>
    </source>
</evidence>
<feature type="chain" id="PRO_0000370906" description="ATP synthase subunit delta">
    <location>
        <begin position="1"/>
        <end position="179"/>
    </location>
</feature>
<dbReference type="EMBL" id="AM902716">
    <property type="protein sequence ID" value="CAP40671.1"/>
    <property type="molecule type" value="Genomic_DNA"/>
</dbReference>
<dbReference type="SMR" id="A9HY39"/>
<dbReference type="STRING" id="94624.Bpet0339"/>
<dbReference type="KEGG" id="bpt:Bpet0339"/>
<dbReference type="eggNOG" id="COG0712">
    <property type="taxonomic scope" value="Bacteria"/>
</dbReference>
<dbReference type="Proteomes" id="UP000001225">
    <property type="component" value="Chromosome"/>
</dbReference>
<dbReference type="GO" id="GO:0005886">
    <property type="term" value="C:plasma membrane"/>
    <property type="evidence" value="ECO:0007669"/>
    <property type="project" value="UniProtKB-SubCell"/>
</dbReference>
<dbReference type="GO" id="GO:0045259">
    <property type="term" value="C:proton-transporting ATP synthase complex"/>
    <property type="evidence" value="ECO:0007669"/>
    <property type="project" value="UniProtKB-KW"/>
</dbReference>
<dbReference type="GO" id="GO:0046933">
    <property type="term" value="F:proton-transporting ATP synthase activity, rotational mechanism"/>
    <property type="evidence" value="ECO:0007669"/>
    <property type="project" value="UniProtKB-UniRule"/>
</dbReference>
<dbReference type="Gene3D" id="1.10.520.20">
    <property type="entry name" value="N-terminal domain of the delta subunit of the F1F0-ATP synthase"/>
    <property type="match status" value="1"/>
</dbReference>
<dbReference type="HAMAP" id="MF_01416">
    <property type="entry name" value="ATP_synth_delta_bact"/>
    <property type="match status" value="1"/>
</dbReference>
<dbReference type="InterPro" id="IPR026015">
    <property type="entry name" value="ATP_synth_OSCP/delta_N_sf"/>
</dbReference>
<dbReference type="InterPro" id="IPR000711">
    <property type="entry name" value="ATPase_OSCP/dsu"/>
</dbReference>
<dbReference type="NCBIfam" id="TIGR01145">
    <property type="entry name" value="ATP_synt_delta"/>
    <property type="match status" value="1"/>
</dbReference>
<dbReference type="NCBIfam" id="NF004402">
    <property type="entry name" value="PRK05758.2-2"/>
    <property type="match status" value="1"/>
</dbReference>
<dbReference type="PANTHER" id="PTHR11910">
    <property type="entry name" value="ATP SYNTHASE DELTA CHAIN"/>
    <property type="match status" value="1"/>
</dbReference>
<dbReference type="Pfam" id="PF00213">
    <property type="entry name" value="OSCP"/>
    <property type="match status" value="1"/>
</dbReference>
<dbReference type="PRINTS" id="PR00125">
    <property type="entry name" value="ATPASEDELTA"/>
</dbReference>
<dbReference type="SUPFAM" id="SSF47928">
    <property type="entry name" value="N-terminal domain of the delta subunit of the F1F0-ATP synthase"/>
    <property type="match status" value="1"/>
</dbReference>